<gene>
    <name evidence="1" type="primary">proA</name>
    <name type="ordered locus">SSU05_0558</name>
</gene>
<keyword id="KW-0028">Amino-acid biosynthesis</keyword>
<keyword id="KW-0963">Cytoplasm</keyword>
<keyword id="KW-0521">NADP</keyword>
<keyword id="KW-0560">Oxidoreductase</keyword>
<keyword id="KW-0641">Proline biosynthesis</keyword>
<feature type="chain" id="PRO_1000049999" description="Gamma-glutamyl phosphate reductase">
    <location>
        <begin position="1"/>
        <end position="412"/>
    </location>
</feature>
<proteinExistence type="inferred from homology"/>
<accession>A4VTT5</accession>
<evidence type="ECO:0000255" key="1">
    <source>
        <dbReference type="HAMAP-Rule" id="MF_00412"/>
    </source>
</evidence>
<name>PROA_STRSY</name>
<organism>
    <name type="scientific">Streptococcus suis (strain 05ZYH33)</name>
    <dbReference type="NCBI Taxonomy" id="391295"/>
    <lineage>
        <taxon>Bacteria</taxon>
        <taxon>Bacillati</taxon>
        <taxon>Bacillota</taxon>
        <taxon>Bacilli</taxon>
        <taxon>Lactobacillales</taxon>
        <taxon>Streptococcaceae</taxon>
        <taxon>Streptococcus</taxon>
    </lineage>
</organism>
<protein>
    <recommendedName>
        <fullName evidence="1">Gamma-glutamyl phosphate reductase</fullName>
        <shortName evidence="1">GPR</shortName>
        <ecNumber evidence="1">1.2.1.41</ecNumber>
    </recommendedName>
    <alternativeName>
        <fullName evidence="1">Glutamate-5-semialdehyde dehydrogenase</fullName>
    </alternativeName>
    <alternativeName>
        <fullName evidence="1">Glutamyl-gamma-semialdehyde dehydrogenase</fullName>
        <shortName evidence="1">GSA dehydrogenase</shortName>
    </alternativeName>
</protein>
<reference key="1">
    <citation type="journal article" date="2007" name="PLoS ONE">
        <title>A glimpse of streptococcal toxic shock syndrome from comparative genomics of S. suis 2 Chinese isolates.</title>
        <authorList>
            <person name="Chen C."/>
            <person name="Tang J."/>
            <person name="Dong W."/>
            <person name="Wang C."/>
            <person name="Feng Y."/>
            <person name="Wang J."/>
            <person name="Zheng F."/>
            <person name="Pan X."/>
            <person name="Liu D."/>
            <person name="Li M."/>
            <person name="Song Y."/>
            <person name="Zhu X."/>
            <person name="Sun H."/>
            <person name="Feng T."/>
            <person name="Guo Z."/>
            <person name="Ju A."/>
            <person name="Ge J."/>
            <person name="Dong Y."/>
            <person name="Sun W."/>
            <person name="Jiang Y."/>
            <person name="Wang J."/>
            <person name="Yan J."/>
            <person name="Yang H."/>
            <person name="Wang X."/>
            <person name="Gao G.F."/>
            <person name="Yang R."/>
            <person name="Wang J."/>
            <person name="Yu J."/>
        </authorList>
    </citation>
    <scope>NUCLEOTIDE SEQUENCE [LARGE SCALE GENOMIC DNA]</scope>
    <source>
        <strain>05ZYH33</strain>
    </source>
</reference>
<comment type="function">
    <text evidence="1">Catalyzes the NADPH-dependent reduction of L-glutamate 5-phosphate into L-glutamate 5-semialdehyde and phosphate. The product spontaneously undergoes cyclization to form 1-pyrroline-5-carboxylate.</text>
</comment>
<comment type="catalytic activity">
    <reaction evidence="1">
        <text>L-glutamate 5-semialdehyde + phosphate + NADP(+) = L-glutamyl 5-phosphate + NADPH + H(+)</text>
        <dbReference type="Rhea" id="RHEA:19541"/>
        <dbReference type="ChEBI" id="CHEBI:15378"/>
        <dbReference type="ChEBI" id="CHEBI:43474"/>
        <dbReference type="ChEBI" id="CHEBI:57783"/>
        <dbReference type="ChEBI" id="CHEBI:58066"/>
        <dbReference type="ChEBI" id="CHEBI:58274"/>
        <dbReference type="ChEBI" id="CHEBI:58349"/>
        <dbReference type="EC" id="1.2.1.41"/>
    </reaction>
</comment>
<comment type="pathway">
    <text evidence="1">Amino-acid biosynthesis; L-proline biosynthesis; L-glutamate 5-semialdehyde from L-glutamate: step 2/2.</text>
</comment>
<comment type="subcellular location">
    <subcellularLocation>
        <location evidence="1">Cytoplasm</location>
    </subcellularLocation>
</comment>
<comment type="similarity">
    <text evidence="1">Belongs to the gamma-glutamyl phosphate reductase family.</text>
</comment>
<dbReference type="EC" id="1.2.1.41" evidence="1"/>
<dbReference type="EMBL" id="CP000407">
    <property type="protein sequence ID" value="ABP89524.1"/>
    <property type="molecule type" value="Genomic_DNA"/>
</dbReference>
<dbReference type="SMR" id="A4VTT5"/>
<dbReference type="STRING" id="391295.SSU05_0558"/>
<dbReference type="KEGG" id="ssu:SSU05_0558"/>
<dbReference type="eggNOG" id="COG0014">
    <property type="taxonomic scope" value="Bacteria"/>
</dbReference>
<dbReference type="HOGENOM" id="CLU_030231_0_0_9"/>
<dbReference type="UniPathway" id="UPA00098">
    <property type="reaction ID" value="UER00360"/>
</dbReference>
<dbReference type="GO" id="GO:0005737">
    <property type="term" value="C:cytoplasm"/>
    <property type="evidence" value="ECO:0007669"/>
    <property type="project" value="UniProtKB-SubCell"/>
</dbReference>
<dbReference type="GO" id="GO:0004350">
    <property type="term" value="F:glutamate-5-semialdehyde dehydrogenase activity"/>
    <property type="evidence" value="ECO:0007669"/>
    <property type="project" value="UniProtKB-UniRule"/>
</dbReference>
<dbReference type="GO" id="GO:0050661">
    <property type="term" value="F:NADP binding"/>
    <property type="evidence" value="ECO:0007669"/>
    <property type="project" value="InterPro"/>
</dbReference>
<dbReference type="GO" id="GO:0055129">
    <property type="term" value="P:L-proline biosynthetic process"/>
    <property type="evidence" value="ECO:0007669"/>
    <property type="project" value="UniProtKB-UniRule"/>
</dbReference>
<dbReference type="CDD" id="cd07079">
    <property type="entry name" value="ALDH_F18-19_ProA-GPR"/>
    <property type="match status" value="1"/>
</dbReference>
<dbReference type="FunFam" id="3.40.309.10:FF:000006">
    <property type="entry name" value="Gamma-glutamyl phosphate reductase"/>
    <property type="match status" value="1"/>
</dbReference>
<dbReference type="Gene3D" id="3.40.605.10">
    <property type="entry name" value="Aldehyde Dehydrogenase, Chain A, domain 1"/>
    <property type="match status" value="1"/>
</dbReference>
<dbReference type="Gene3D" id="3.40.309.10">
    <property type="entry name" value="Aldehyde Dehydrogenase, Chain A, domain 2"/>
    <property type="match status" value="1"/>
</dbReference>
<dbReference type="HAMAP" id="MF_00412">
    <property type="entry name" value="ProA"/>
    <property type="match status" value="1"/>
</dbReference>
<dbReference type="InterPro" id="IPR016161">
    <property type="entry name" value="Ald_DH/histidinol_DH"/>
</dbReference>
<dbReference type="InterPro" id="IPR016163">
    <property type="entry name" value="Ald_DH_C"/>
</dbReference>
<dbReference type="InterPro" id="IPR016162">
    <property type="entry name" value="Ald_DH_N"/>
</dbReference>
<dbReference type="InterPro" id="IPR015590">
    <property type="entry name" value="Aldehyde_DH_dom"/>
</dbReference>
<dbReference type="InterPro" id="IPR020593">
    <property type="entry name" value="G-glutamylP_reductase_CS"/>
</dbReference>
<dbReference type="InterPro" id="IPR012134">
    <property type="entry name" value="Glu-5-SA_DH"/>
</dbReference>
<dbReference type="InterPro" id="IPR000965">
    <property type="entry name" value="GPR_dom"/>
</dbReference>
<dbReference type="NCBIfam" id="NF001221">
    <property type="entry name" value="PRK00197.1"/>
    <property type="match status" value="1"/>
</dbReference>
<dbReference type="NCBIfam" id="TIGR00407">
    <property type="entry name" value="proA"/>
    <property type="match status" value="1"/>
</dbReference>
<dbReference type="PANTHER" id="PTHR11063:SF8">
    <property type="entry name" value="DELTA-1-PYRROLINE-5-CARBOXYLATE SYNTHASE"/>
    <property type="match status" value="1"/>
</dbReference>
<dbReference type="PANTHER" id="PTHR11063">
    <property type="entry name" value="GLUTAMATE SEMIALDEHYDE DEHYDROGENASE"/>
    <property type="match status" value="1"/>
</dbReference>
<dbReference type="Pfam" id="PF00171">
    <property type="entry name" value="Aldedh"/>
    <property type="match status" value="1"/>
</dbReference>
<dbReference type="PIRSF" id="PIRSF000151">
    <property type="entry name" value="GPR"/>
    <property type="match status" value="1"/>
</dbReference>
<dbReference type="SUPFAM" id="SSF53720">
    <property type="entry name" value="ALDH-like"/>
    <property type="match status" value="1"/>
</dbReference>
<dbReference type="PROSITE" id="PS01223">
    <property type="entry name" value="PROA"/>
    <property type="match status" value="1"/>
</dbReference>
<sequence>MTTTQVLLDSLLANKASINLATTEQKNQALSAMADQLVAQTEAILAGNAIDMEHAQGKISQVMQDRLLLTEERIEAMADGIRALIGLPDPVGLVLEESTRADGLNICKKSIPFGLVGMIYESRPNVTSDAAALAIKSGNAVILRGGKEAFHSAKAIVTALKSGLEEAGVSPKVIELVQDTSRVSATELMTAKGKIDLLVPRGGAGLIQAVVENATVPVIETGTGICHVYVDKDADLDKALRIVVNAKTSRPSVCNAAEVLLVHEEIASQFLPRLEEALSGQVELRADSQAQALLNQARPAGDQDFDTEFLDYIMAVKVVSSVEEAISHIAQHSTGHSEAIVTENSQTAEHFTLHVDSAAVYVNASTRFTDGGEFGLGCELGISTQKMHARGPMGLREMTTYKYIITGDGHIR</sequence>